<protein>
    <recommendedName>
        <fullName>Middle T antigen</fullName>
        <shortName>MT</shortName>
        <shortName>MT-AG</shortName>
    </recommendedName>
</protein>
<keyword id="KW-0025">Alternative splicing</keyword>
<keyword id="KW-0244">Early protein</keyword>
<keyword id="KW-1043">Host membrane</keyword>
<keyword id="KW-0945">Host-virus interaction</keyword>
<keyword id="KW-0472">Membrane</keyword>
<keyword id="KW-0553">Oncogene</keyword>
<keyword id="KW-0597">Phosphoprotein</keyword>
<keyword id="KW-0812">Transmembrane</keyword>
<keyword id="KW-1133">Transmembrane helix</keyword>
<evidence type="ECO:0000250" key="1">
    <source>
        <dbReference type="UniProtKB" id="P03077"/>
    </source>
</evidence>
<evidence type="ECO:0000255" key="2"/>
<evidence type="ECO:0000256" key="3">
    <source>
        <dbReference type="SAM" id="MobiDB-lite"/>
    </source>
</evidence>
<evidence type="ECO:0000305" key="4"/>
<organism>
    <name type="scientific">Murine polyomavirus (strain A3)</name>
    <name type="common">MPyV</name>
    <dbReference type="NCBI Taxonomy" id="157703"/>
    <lineage>
        <taxon>Viruses</taxon>
        <taxon>Monodnaviria</taxon>
        <taxon>Shotokuvirae</taxon>
        <taxon>Cossaviricota</taxon>
        <taxon>Papovaviricetes</taxon>
        <taxon>Sepolyvirales</taxon>
        <taxon>Polyomaviridae</taxon>
        <taxon>Alphapolyomavirus</taxon>
        <taxon>Mus musculus polyomavirus 1</taxon>
    </lineage>
</organism>
<organismHost>
    <name type="scientific">Mus musculus</name>
    <name type="common">Mouse</name>
    <dbReference type="NCBI Taxonomy" id="10090"/>
</organismHost>
<name>MT_POVM3</name>
<dbReference type="EMBL" id="J02289">
    <property type="protein sequence ID" value="AAA46873.1"/>
    <property type="molecule type" value="Genomic_DNA"/>
</dbReference>
<dbReference type="PIR" id="A93718">
    <property type="entry name" value="TVVPM"/>
</dbReference>
<dbReference type="SMR" id="P0DOJ8"/>
<dbReference type="Proteomes" id="UP000006847">
    <property type="component" value="Genome"/>
</dbReference>
<dbReference type="GO" id="GO:0033644">
    <property type="term" value="C:host cell membrane"/>
    <property type="evidence" value="ECO:0007669"/>
    <property type="project" value="UniProtKB-SubCell"/>
</dbReference>
<dbReference type="GO" id="GO:0016020">
    <property type="term" value="C:membrane"/>
    <property type="evidence" value="ECO:0007669"/>
    <property type="project" value="UniProtKB-KW"/>
</dbReference>
<dbReference type="Gene3D" id="1.10.287.110">
    <property type="entry name" value="DnaJ domain"/>
    <property type="match status" value="1"/>
</dbReference>
<dbReference type="Gene3D" id="1.20.120.1860">
    <property type="entry name" value="Small t-antigen, unique domain"/>
    <property type="match status" value="1"/>
</dbReference>
<dbReference type="InterPro" id="IPR001623">
    <property type="entry name" value="DnaJ_domain"/>
</dbReference>
<dbReference type="InterPro" id="IPR036869">
    <property type="entry name" value="J_dom_sf"/>
</dbReference>
<dbReference type="InterPro" id="IPR003354">
    <property type="entry name" value="Papo_T_antigen"/>
</dbReference>
<dbReference type="InterPro" id="IPR036092">
    <property type="entry name" value="Papo_T_antigensf"/>
</dbReference>
<dbReference type="Pfam" id="PF02380">
    <property type="entry name" value="Papo_T_antigen"/>
    <property type="match status" value="1"/>
</dbReference>
<dbReference type="SMART" id="SM00271">
    <property type="entry name" value="DnaJ"/>
    <property type="match status" value="1"/>
</dbReference>
<dbReference type="SUPFAM" id="SSF46565">
    <property type="entry name" value="Chaperone J-domain"/>
    <property type="match status" value="1"/>
</dbReference>
<dbReference type="SUPFAM" id="SSF161240">
    <property type="entry name" value="T-antigen specific domain-like"/>
    <property type="match status" value="1"/>
</dbReference>
<sequence length="421" mass="48694">MDRVLSRADKERLLELLKLPRQLWGDFGRMQQAYKQQSLLLHPDKGGSHALMQELNSLWGTFKTEVYNLRMNLGGTGFQVRRLHADGWNLSTKDTFGDRYYQRFCRMPLTCLVNVKYSSCSCILCLLRKQHRELKDKCDARCLVLGECFCLECYMQWFGTPTRDVLNLYADFIASMPIDWLDLDVHSVYNPKRRSEELRRAATVHYTMTTGHSAMEASTSQGNGMISSESGTPATSRRLRLPSLLSNPTYSVMRSHSYPPTRVLQQIHPHILLEEDEILVLLSPMTAYPRTPPELLYPESDQDQLEPLEEEEEEYMPMEDLYLDILPEEQVPQLIPPPIIPRAGLSPWEGLILRDLQRAHFDPILDASQRMRATHRAALRAHSMQRHLRRLGRTLLLVTFLAALLGICLMLFILIKRSRHF</sequence>
<reference key="1">
    <citation type="journal article" date="1979" name="Cell">
        <title>The nucleotide sequence and genome organization of the polyoma early region: extensive nucleotide and amino acid homology with SV40.</title>
        <authorList>
            <person name="Friedmann T."/>
            <person name="Esty A."/>
            <person name="LaPorte P."/>
            <person name="Deininger P.L."/>
        </authorList>
    </citation>
    <scope>NUCLEOTIDE SEQUENCE [GENOMIC DNA]</scope>
</reference>
<reference key="2">
    <citation type="journal article" date="1980" name="Nucleic Acids Res.">
        <title>The nucleotide sequence and restriction enzyme sites of the polyoma genome.</title>
        <authorList>
            <person name="Deininger P.L."/>
            <person name="Esty A."/>
            <person name="LaPorte P."/>
            <person name="Hsu H."/>
            <person name="Friedmann T."/>
        </authorList>
    </citation>
    <scope>NUCLEOTIDE SEQUENCE [GENOMIC DNA]</scope>
</reference>
<proteinExistence type="inferred from homology"/>
<comment type="function">
    <text evidence="1">Plays a role in transformation by modulating the activities of cellular proteins involved in control of cell proliferation and by acting as a functional homolog of an activated tyrosine kinase-associated growth-factor receptor. Recruits upon association with host Ppp2/PP2A the Src tyrosine kinase components Src, Yes and Fyn, thereby activating their kinase activity. Activation of Shc1, Pclg1 and p85 mediate signal transduction pathways leading to cell cycle progression and cell division. MT also plays a role in regulation of early and late gene expression and in viral DNA replication.</text>
</comment>
<comment type="subunit">
    <text evidence="1">Interacts with host Ppp2/PP2A A and C subunits; this interaction alters Ppp2/PP2A substrate specificity and localization. Interacts with host Src, Yes1, and Fyn. Interacts with host Shc1, Plcg1 and p85; these interactions lead to cell cycle progression. Interacts with host 14-3-3 proteins.</text>
</comment>
<comment type="subcellular location">
    <subcellularLocation>
        <location evidence="4">Host membrane</location>
        <topology evidence="4">Single-pass membrane protein</topology>
    </subcellularLocation>
</comment>
<comment type="alternative products">
    <event type="alternative splicing"/>
    <isoform>
        <id>P0DOJ8-1</id>
        <id>P03076-1</id>
        <name>Middle T antigen</name>
        <sequence type="displayed"/>
    </isoform>
    <isoform>
        <id>P68834-1</id>
        <name>Small t antigen</name>
        <sequence type="external"/>
    </isoform>
    <isoform>
        <id>P0DOJ5-1</id>
        <id>P03074-1</id>
        <name>Large T antigen</name>
        <sequence type="external"/>
    </isoform>
</comment>
<comment type="domain">
    <text>The NPTY motif is required for interaction with host Shc1 protein.</text>
</comment>
<comment type="PTM">
    <text evidence="1">Tyrosine-phosphorylated on three residues 250, 315 and 322, providing docking sites for host Shc1, p85, and Plcg1, respectively.</text>
</comment>
<accession>P0DOJ8</accession>
<accession>P03076</accession>
<accession>Q76TX4</accession>
<accession>Q76W01</accession>
<accession>Q89765</accession>
<feature type="chain" id="PRO_0000442784" description="Middle T antigen">
    <location>
        <begin position="1"/>
        <end position="421"/>
    </location>
</feature>
<feature type="topological domain" description="Cytoplasmic" evidence="2">
    <location>
        <begin position="1"/>
        <end position="394"/>
    </location>
</feature>
<feature type="transmembrane region" description="Helical" evidence="2">
    <location>
        <begin position="395"/>
        <end position="415"/>
    </location>
</feature>
<feature type="topological domain" description="Extracellular" evidence="2">
    <location>
        <begin position="416"/>
        <end position="421"/>
    </location>
</feature>
<feature type="domain" description="J">
    <location>
        <begin position="12"/>
        <end position="75"/>
    </location>
</feature>
<feature type="region of interest" description="Disordered" evidence="3">
    <location>
        <begin position="215"/>
        <end position="237"/>
    </location>
</feature>
<feature type="compositionally biased region" description="Polar residues" evidence="3">
    <location>
        <begin position="215"/>
        <end position="235"/>
    </location>
</feature>
<feature type="modified residue" description="Phosphotyrosine; by host" evidence="1">
    <location>
        <position position="250"/>
    </location>
</feature>
<feature type="modified residue" description="Phosphoserine; by host" evidence="1">
    <location>
        <position position="257"/>
    </location>
</feature>
<feature type="modified residue" description="Phosphotyrosine; by host" evidence="1">
    <location>
        <position position="315"/>
    </location>
</feature>
<feature type="modified residue" description="Phosphotyrosine; by host" evidence="1">
    <location>
        <position position="322"/>
    </location>
</feature>